<protein>
    <recommendedName>
        <fullName evidence="1">Large ribosomal subunit protein uL4</fullName>
    </recommendedName>
    <alternativeName>
        <fullName evidence="3">50S ribosomal protein L4</fullName>
    </alternativeName>
</protein>
<accession>A6VLI9</accession>
<evidence type="ECO:0000255" key="1">
    <source>
        <dbReference type="HAMAP-Rule" id="MF_01328"/>
    </source>
</evidence>
<evidence type="ECO:0000256" key="2">
    <source>
        <dbReference type="SAM" id="MobiDB-lite"/>
    </source>
</evidence>
<evidence type="ECO:0000305" key="3"/>
<reference key="1">
    <citation type="journal article" date="2010" name="BMC Genomics">
        <title>A genomic perspective on the potential of Actinobacillus succinogenes for industrial succinate production.</title>
        <authorList>
            <person name="McKinlay J.B."/>
            <person name="Laivenieks M."/>
            <person name="Schindler B.D."/>
            <person name="McKinlay A.A."/>
            <person name="Siddaramappa S."/>
            <person name="Challacombe J.F."/>
            <person name="Lowry S.R."/>
            <person name="Clum A."/>
            <person name="Lapidus A.L."/>
            <person name="Burkhart K.B."/>
            <person name="Harkins V."/>
            <person name="Vieille C."/>
        </authorList>
    </citation>
    <scope>NUCLEOTIDE SEQUENCE [LARGE SCALE GENOMIC DNA]</scope>
    <source>
        <strain>ATCC 55618 / DSM 22257 / CCUG 43843 / 130Z</strain>
    </source>
</reference>
<name>RL4_ACTSZ</name>
<proteinExistence type="inferred from homology"/>
<feature type="chain" id="PRO_1000073266" description="Large ribosomal subunit protein uL4">
    <location>
        <begin position="1"/>
        <end position="201"/>
    </location>
</feature>
<feature type="region of interest" description="Disordered" evidence="2">
    <location>
        <begin position="44"/>
        <end position="71"/>
    </location>
</feature>
<gene>
    <name evidence="1" type="primary">rplD</name>
    <name type="ordered locus">Asuc_0460</name>
</gene>
<keyword id="KW-1185">Reference proteome</keyword>
<keyword id="KW-0687">Ribonucleoprotein</keyword>
<keyword id="KW-0689">Ribosomal protein</keyword>
<keyword id="KW-0694">RNA-binding</keyword>
<keyword id="KW-0699">rRNA-binding</keyword>
<sequence>MELQVVGANNALTVSETTFGREFNEALIHQVVVAYAAGARQGSRAQKTRAEVSGSGKKPWRQKGTGRARSGDIKSPIWRSGGITFAAKPQDHSQKVNKKMYRGAIKSILSELVRQDRLVVVEKFEIDAPKTKVLAQKLKDMALNDALIITASLDENLFLAARNLYKVDVRDVQGIDPVSLIAFDKVVVTVDAVKQIEEMLA</sequence>
<comment type="function">
    <text evidence="1">One of the primary rRNA binding proteins, this protein initially binds near the 5'-end of the 23S rRNA. It is important during the early stages of 50S assembly. It makes multiple contacts with different domains of the 23S rRNA in the assembled 50S subunit and ribosome.</text>
</comment>
<comment type="function">
    <text evidence="1">Forms part of the polypeptide exit tunnel.</text>
</comment>
<comment type="subunit">
    <text evidence="1">Part of the 50S ribosomal subunit.</text>
</comment>
<comment type="similarity">
    <text evidence="1">Belongs to the universal ribosomal protein uL4 family.</text>
</comment>
<dbReference type="EMBL" id="CP000746">
    <property type="protein sequence ID" value="ABR73836.1"/>
    <property type="molecule type" value="Genomic_DNA"/>
</dbReference>
<dbReference type="RefSeq" id="WP_012072220.1">
    <property type="nucleotide sequence ID" value="NC_009655.1"/>
</dbReference>
<dbReference type="SMR" id="A6VLI9"/>
<dbReference type="STRING" id="339671.Asuc_0460"/>
<dbReference type="KEGG" id="asu:Asuc_0460"/>
<dbReference type="eggNOG" id="COG0088">
    <property type="taxonomic scope" value="Bacteria"/>
</dbReference>
<dbReference type="HOGENOM" id="CLU_041575_5_2_6"/>
<dbReference type="OrthoDB" id="9803201at2"/>
<dbReference type="Proteomes" id="UP000001114">
    <property type="component" value="Chromosome"/>
</dbReference>
<dbReference type="GO" id="GO:1990904">
    <property type="term" value="C:ribonucleoprotein complex"/>
    <property type="evidence" value="ECO:0007669"/>
    <property type="project" value="UniProtKB-KW"/>
</dbReference>
<dbReference type="GO" id="GO:0005840">
    <property type="term" value="C:ribosome"/>
    <property type="evidence" value="ECO:0007669"/>
    <property type="project" value="UniProtKB-KW"/>
</dbReference>
<dbReference type="GO" id="GO:0019843">
    <property type="term" value="F:rRNA binding"/>
    <property type="evidence" value="ECO:0007669"/>
    <property type="project" value="UniProtKB-UniRule"/>
</dbReference>
<dbReference type="GO" id="GO:0003735">
    <property type="term" value="F:structural constituent of ribosome"/>
    <property type="evidence" value="ECO:0007669"/>
    <property type="project" value="InterPro"/>
</dbReference>
<dbReference type="GO" id="GO:0006412">
    <property type="term" value="P:translation"/>
    <property type="evidence" value="ECO:0007669"/>
    <property type="project" value="UniProtKB-UniRule"/>
</dbReference>
<dbReference type="FunFam" id="3.40.1370.10:FF:000001">
    <property type="entry name" value="50S ribosomal protein L4"/>
    <property type="match status" value="1"/>
</dbReference>
<dbReference type="Gene3D" id="3.40.1370.10">
    <property type="match status" value="1"/>
</dbReference>
<dbReference type="HAMAP" id="MF_01328_B">
    <property type="entry name" value="Ribosomal_uL4_B"/>
    <property type="match status" value="1"/>
</dbReference>
<dbReference type="InterPro" id="IPR002136">
    <property type="entry name" value="Ribosomal_uL4"/>
</dbReference>
<dbReference type="InterPro" id="IPR013005">
    <property type="entry name" value="Ribosomal_uL4-like"/>
</dbReference>
<dbReference type="InterPro" id="IPR023574">
    <property type="entry name" value="Ribosomal_uL4_dom_sf"/>
</dbReference>
<dbReference type="NCBIfam" id="TIGR03953">
    <property type="entry name" value="rplD_bact"/>
    <property type="match status" value="1"/>
</dbReference>
<dbReference type="PANTHER" id="PTHR10746">
    <property type="entry name" value="50S RIBOSOMAL PROTEIN L4"/>
    <property type="match status" value="1"/>
</dbReference>
<dbReference type="PANTHER" id="PTHR10746:SF6">
    <property type="entry name" value="LARGE RIBOSOMAL SUBUNIT PROTEIN UL4M"/>
    <property type="match status" value="1"/>
</dbReference>
<dbReference type="Pfam" id="PF00573">
    <property type="entry name" value="Ribosomal_L4"/>
    <property type="match status" value="1"/>
</dbReference>
<dbReference type="SUPFAM" id="SSF52166">
    <property type="entry name" value="Ribosomal protein L4"/>
    <property type="match status" value="1"/>
</dbReference>
<organism>
    <name type="scientific">Actinobacillus succinogenes (strain ATCC 55618 / DSM 22257 / CCUG 43843 / 130Z)</name>
    <dbReference type="NCBI Taxonomy" id="339671"/>
    <lineage>
        <taxon>Bacteria</taxon>
        <taxon>Pseudomonadati</taxon>
        <taxon>Pseudomonadota</taxon>
        <taxon>Gammaproteobacteria</taxon>
        <taxon>Pasteurellales</taxon>
        <taxon>Pasteurellaceae</taxon>
        <taxon>Actinobacillus</taxon>
    </lineage>
</organism>